<reference key="1">
    <citation type="journal article" date="2007" name="DNA Res.">
        <title>Complete genomic structure of the bloom-forming toxic cyanobacterium Microcystis aeruginosa NIES-843.</title>
        <authorList>
            <person name="Kaneko T."/>
            <person name="Nakajima N."/>
            <person name="Okamoto S."/>
            <person name="Suzuki I."/>
            <person name="Tanabe Y."/>
            <person name="Tamaoki M."/>
            <person name="Nakamura Y."/>
            <person name="Kasai F."/>
            <person name="Watanabe A."/>
            <person name="Kawashima K."/>
            <person name="Kishida Y."/>
            <person name="Ono A."/>
            <person name="Shimizu Y."/>
            <person name="Takahashi C."/>
            <person name="Minami C."/>
            <person name="Fujishiro T."/>
            <person name="Kohara M."/>
            <person name="Katoh M."/>
            <person name="Nakazaki N."/>
            <person name="Nakayama S."/>
            <person name="Yamada M."/>
            <person name="Tabata S."/>
            <person name="Watanabe M.M."/>
        </authorList>
    </citation>
    <scope>NUCLEOTIDE SEQUENCE [LARGE SCALE GENOMIC DNA]</scope>
    <source>
        <strain>NIES-843 / IAM M-247</strain>
    </source>
</reference>
<gene>
    <name evidence="1" type="primary">murQ</name>
    <name type="ordered locus">MAE_08000</name>
</gene>
<protein>
    <recommendedName>
        <fullName evidence="1">N-acetylmuramic acid 6-phosphate etherase</fullName>
        <shortName evidence="1">MurNAc-6-P etherase</shortName>
        <ecNumber evidence="1">4.2.1.126</ecNumber>
    </recommendedName>
    <alternativeName>
        <fullName evidence="1">N-acetylmuramic acid 6-phosphate hydrolase</fullName>
    </alternativeName>
    <alternativeName>
        <fullName evidence="1">N-acetylmuramic acid 6-phosphate lyase</fullName>
    </alternativeName>
</protein>
<proteinExistence type="inferred from homology"/>
<dbReference type="EC" id="4.2.1.126" evidence="1"/>
<dbReference type="EMBL" id="AP009552">
    <property type="protein sequence ID" value="BAG00622.1"/>
    <property type="molecule type" value="Genomic_DNA"/>
</dbReference>
<dbReference type="RefSeq" id="WP_012264352.1">
    <property type="nucleotide sequence ID" value="NC_010296.1"/>
</dbReference>
<dbReference type="SMR" id="B0JQG3"/>
<dbReference type="STRING" id="449447.MAE_08000"/>
<dbReference type="PaxDb" id="449447-MAE_08000"/>
<dbReference type="EnsemblBacteria" id="BAG00622">
    <property type="protein sequence ID" value="BAG00622"/>
    <property type="gene ID" value="MAE_08000"/>
</dbReference>
<dbReference type="KEGG" id="mar:MAE_08000"/>
<dbReference type="PATRIC" id="fig|449447.4.peg.742"/>
<dbReference type="eggNOG" id="COG2103">
    <property type="taxonomic scope" value="Bacteria"/>
</dbReference>
<dbReference type="HOGENOM" id="CLU_049049_1_1_3"/>
<dbReference type="BioCyc" id="MAER449447:MAE_RS03570-MONOMER"/>
<dbReference type="UniPathway" id="UPA00342"/>
<dbReference type="Proteomes" id="UP000001510">
    <property type="component" value="Chromosome"/>
</dbReference>
<dbReference type="GO" id="GO:0097367">
    <property type="term" value="F:carbohydrate derivative binding"/>
    <property type="evidence" value="ECO:0007669"/>
    <property type="project" value="InterPro"/>
</dbReference>
<dbReference type="GO" id="GO:0016835">
    <property type="term" value="F:carbon-oxygen lyase activity"/>
    <property type="evidence" value="ECO:0007669"/>
    <property type="project" value="UniProtKB-UniRule"/>
</dbReference>
<dbReference type="GO" id="GO:0016803">
    <property type="term" value="F:ether hydrolase activity"/>
    <property type="evidence" value="ECO:0007669"/>
    <property type="project" value="TreeGrafter"/>
</dbReference>
<dbReference type="GO" id="GO:0046348">
    <property type="term" value="P:amino sugar catabolic process"/>
    <property type="evidence" value="ECO:0007669"/>
    <property type="project" value="InterPro"/>
</dbReference>
<dbReference type="GO" id="GO:0097173">
    <property type="term" value="P:N-acetylmuramic acid catabolic process"/>
    <property type="evidence" value="ECO:0007669"/>
    <property type="project" value="UniProtKB-UniPathway"/>
</dbReference>
<dbReference type="GO" id="GO:0009254">
    <property type="term" value="P:peptidoglycan turnover"/>
    <property type="evidence" value="ECO:0007669"/>
    <property type="project" value="TreeGrafter"/>
</dbReference>
<dbReference type="CDD" id="cd05007">
    <property type="entry name" value="SIS_Etherase"/>
    <property type="match status" value="1"/>
</dbReference>
<dbReference type="FunFam" id="1.10.8.1080:FF:000001">
    <property type="entry name" value="N-acetylmuramic acid 6-phosphate etherase"/>
    <property type="match status" value="1"/>
</dbReference>
<dbReference type="FunFam" id="3.40.50.10490:FF:000014">
    <property type="entry name" value="N-acetylmuramic acid 6-phosphate etherase"/>
    <property type="match status" value="1"/>
</dbReference>
<dbReference type="Gene3D" id="1.10.8.1080">
    <property type="match status" value="1"/>
</dbReference>
<dbReference type="Gene3D" id="3.40.50.10490">
    <property type="entry name" value="Glucose-6-phosphate isomerase like protein, domain 1"/>
    <property type="match status" value="1"/>
</dbReference>
<dbReference type="HAMAP" id="MF_00068">
    <property type="entry name" value="MurQ"/>
    <property type="match status" value="1"/>
</dbReference>
<dbReference type="InterPro" id="IPR005488">
    <property type="entry name" value="Etherase_MurQ"/>
</dbReference>
<dbReference type="InterPro" id="IPR005486">
    <property type="entry name" value="Glucokinase_regulatory_CS"/>
</dbReference>
<dbReference type="InterPro" id="IPR040190">
    <property type="entry name" value="MURQ/GCKR"/>
</dbReference>
<dbReference type="InterPro" id="IPR001347">
    <property type="entry name" value="SIS_dom"/>
</dbReference>
<dbReference type="InterPro" id="IPR046348">
    <property type="entry name" value="SIS_dom_sf"/>
</dbReference>
<dbReference type="NCBIfam" id="TIGR00274">
    <property type="entry name" value="N-acetylmuramic acid 6-phosphate etherase"/>
    <property type="match status" value="1"/>
</dbReference>
<dbReference type="NCBIfam" id="NF003915">
    <property type="entry name" value="PRK05441.1"/>
    <property type="match status" value="1"/>
</dbReference>
<dbReference type="NCBIfam" id="NF009222">
    <property type="entry name" value="PRK12570.1"/>
    <property type="match status" value="1"/>
</dbReference>
<dbReference type="PANTHER" id="PTHR10088">
    <property type="entry name" value="GLUCOKINASE REGULATORY PROTEIN"/>
    <property type="match status" value="1"/>
</dbReference>
<dbReference type="PANTHER" id="PTHR10088:SF4">
    <property type="entry name" value="GLUCOKINASE REGULATORY PROTEIN"/>
    <property type="match status" value="1"/>
</dbReference>
<dbReference type="Pfam" id="PF20741">
    <property type="entry name" value="GKRP-like_C"/>
    <property type="match status" value="1"/>
</dbReference>
<dbReference type="Pfam" id="PF22645">
    <property type="entry name" value="GKRP_SIS_N"/>
    <property type="match status" value="1"/>
</dbReference>
<dbReference type="SUPFAM" id="SSF53697">
    <property type="entry name" value="SIS domain"/>
    <property type="match status" value="1"/>
</dbReference>
<dbReference type="PROSITE" id="PS01272">
    <property type="entry name" value="GCKR"/>
    <property type="match status" value="1"/>
</dbReference>
<dbReference type="PROSITE" id="PS51464">
    <property type="entry name" value="SIS"/>
    <property type="match status" value="1"/>
</dbReference>
<accession>B0JQG3</accession>
<comment type="function">
    <text evidence="1">Specifically catalyzes the cleavage of the D-lactyl ether substituent of MurNAc 6-phosphate, producing GlcNAc 6-phosphate and D-lactate.</text>
</comment>
<comment type="catalytic activity">
    <reaction evidence="1">
        <text>N-acetyl-D-muramate 6-phosphate + H2O = N-acetyl-D-glucosamine 6-phosphate + (R)-lactate</text>
        <dbReference type="Rhea" id="RHEA:26410"/>
        <dbReference type="ChEBI" id="CHEBI:15377"/>
        <dbReference type="ChEBI" id="CHEBI:16004"/>
        <dbReference type="ChEBI" id="CHEBI:57513"/>
        <dbReference type="ChEBI" id="CHEBI:58722"/>
        <dbReference type="EC" id="4.2.1.126"/>
    </reaction>
</comment>
<comment type="pathway">
    <text evidence="1">Amino-sugar metabolism; N-acetylmuramate degradation.</text>
</comment>
<comment type="subunit">
    <text evidence="1">Homodimer.</text>
</comment>
<comment type="miscellaneous">
    <text evidence="1">A lyase-type mechanism (elimination/hydration) is suggested for the cleavage of the lactyl ether bond of MurNAc 6-phosphate, with the formation of an alpha,beta-unsaturated aldehyde intermediate with (E)-stereochemistry, followed by the syn addition of water to give product.</text>
</comment>
<comment type="similarity">
    <text evidence="1">Belongs to the GCKR-like family. MurNAc-6-P etherase subfamily.</text>
</comment>
<keyword id="KW-0119">Carbohydrate metabolism</keyword>
<keyword id="KW-0456">Lyase</keyword>
<organism>
    <name type="scientific">Microcystis aeruginosa (strain NIES-843 / IAM M-2473)</name>
    <dbReference type="NCBI Taxonomy" id="449447"/>
    <lineage>
        <taxon>Bacteria</taxon>
        <taxon>Bacillati</taxon>
        <taxon>Cyanobacteriota</taxon>
        <taxon>Cyanophyceae</taxon>
        <taxon>Oscillatoriophycideae</taxon>
        <taxon>Chroococcales</taxon>
        <taxon>Microcystaceae</taxon>
        <taxon>Microcystis</taxon>
    </lineage>
</organism>
<sequence>MEQWESRGHLLTEQINPNSLNLDQLNPLELVDLFNREDAQTLKAIAMARQELALGISLTSQALAKGGRLFYIGAGTSGRLGVLDAAECPPTFCTPPELVQGIIAGGAAALVRSSEDLEDKAEDGAAIIAQREIHELDVVVGITAGGTTPYVHGALQAAKQRGATTIAISCVPAEQVEIAVDVDIRLLTGPELLAGSTRLKAGTVTKMALNILSTGTMVMLGKVYGNQMVDVAVTNHKLHDRALRIICHLTDVSREEAAILLEKSGRRVKLALLMQKTGLSAAAGQELLQKHRGQLRAALQAYNQID</sequence>
<evidence type="ECO:0000255" key="1">
    <source>
        <dbReference type="HAMAP-Rule" id="MF_00068"/>
    </source>
</evidence>
<name>MURQ_MICAN</name>
<feature type="chain" id="PRO_1000075110" description="N-acetylmuramic acid 6-phosphate etherase">
    <location>
        <begin position="1"/>
        <end position="306"/>
    </location>
</feature>
<feature type="domain" description="SIS" evidence="1">
    <location>
        <begin position="59"/>
        <end position="222"/>
    </location>
</feature>
<feature type="active site" description="Proton donor" evidence="1">
    <location>
        <position position="87"/>
    </location>
</feature>
<feature type="active site" evidence="1">
    <location>
        <position position="118"/>
    </location>
</feature>